<feature type="chain" id="PRO_0000053889" description="Pleckstrin homology domain-containing family B member 2">
    <location>
        <begin position="1"/>
        <end position="222"/>
    </location>
</feature>
<feature type="domain" description="PH" evidence="1">
    <location>
        <begin position="2"/>
        <end position="109"/>
    </location>
</feature>
<feature type="binding site">
    <location>
        <position position="20"/>
    </location>
    <ligand>
        <name>a 1,2-diacyl-sn-glycero-3-phospho-L-serine</name>
        <dbReference type="ChEBI" id="CHEBI:57262"/>
    </ligand>
</feature>
<feature type="splice variant" id="VSP_045163" description="In isoform 4." evidence="4">
    <original>AWKFTLQDSRTNTAYVGSAVMTDETSVVSSPPPYTAYAAPAPEQAYGYGPYGGAYPPGTQVVYAANGQAYAVPYQYPYAGLYGQQPANQVIIRERYRDNDSDLALGMLAGAATGMALGSLFWVF</original>
    <variation>LMAMGHTVVRTRQELKLSTLRMGRRMPCPTSTHMQDFMDSSLLTKSSFESAIETTTATWHWACWQEQPRAWP</variation>
    <location>
        <begin position="99"/>
        <end position="222"/>
    </location>
</feature>
<feature type="splice variant" id="VSP_047118" description="In isoform 6." evidence="7">
    <original>E</original>
    <variation>EVGRTLSLQ</variation>
    <location>
        <position position="141"/>
    </location>
</feature>
<feature type="splice variant" id="VSP_009783" description="In isoform 2." evidence="5">
    <original>QAYGYGPYGGAYPPGTQVVYAANGQAYAVPYQYPYAGLYGQQPANQVIIRERYRDNDSDLALGMLAGAATGMALGSLFWVF</original>
    <variation>ELHSKGPKIHTTTSAKTQAVLPTRCFFPSESPIRRSVQISVLLPAVNIRRRIKLTFPQPARPRAPRSLCLWQTWFAGKRAPSLPTAATAPALPSCPSPPAPSKALPPSLAGWRSPSSAPLPPEQALAPRSFQLSKHQARPRPHRPGTPPVPAWPGVPPPPPARPPALR</variation>
    <location>
        <begin position="142"/>
        <end position="222"/>
    </location>
</feature>
<feature type="splice variant" id="VSP_045164" description="In isoform 5." evidence="4">
    <original>QAYGYGPYGGAYPPGTQVVYAANGQAYAVPYQYPYAGLYGQQPANQVIIRERYRDNDSDLALGMLAGAATGMALGSLFWVF</original>
    <variation>DFMDSSLLTKSSFESAIETTTATWHWACWQEQPRAWP</variation>
    <location>
        <begin position="142"/>
        <end position="222"/>
    </location>
</feature>
<feature type="splice variant" id="VSP_009784" description="In isoform 3." evidence="4 6">
    <location>
        <position position="142"/>
    </location>
</feature>
<feature type="sequence conflict" description="In Ref. 1; BAA91379." evidence="7" ref="1">
    <original>Y</original>
    <variation>H</variation>
    <location>
        <position position="172"/>
    </location>
</feature>
<feature type="strand" evidence="8">
    <location>
        <begin position="4"/>
        <end position="12"/>
    </location>
</feature>
<feature type="strand" evidence="8">
    <location>
        <begin position="14"/>
        <end position="16"/>
    </location>
</feature>
<feature type="strand" evidence="8">
    <location>
        <begin position="19"/>
        <end position="26"/>
    </location>
</feature>
<feature type="strand" evidence="8">
    <location>
        <begin position="30"/>
        <end position="37"/>
    </location>
</feature>
<feature type="strand" evidence="8">
    <location>
        <begin position="42"/>
        <end position="48"/>
    </location>
</feature>
<feature type="helix" evidence="8">
    <location>
        <begin position="49"/>
        <end position="52"/>
    </location>
</feature>
<feature type="strand" evidence="8">
    <location>
        <begin position="53"/>
        <end position="58"/>
    </location>
</feature>
<feature type="helix" evidence="8">
    <location>
        <begin position="59"/>
        <end position="61"/>
    </location>
</feature>
<feature type="helix" evidence="8">
    <location>
        <begin position="73"/>
        <end position="75"/>
    </location>
</feature>
<feature type="strand" evidence="8">
    <location>
        <begin position="76"/>
        <end position="81"/>
    </location>
</feature>
<feature type="strand" evidence="8">
    <location>
        <begin position="86"/>
        <end position="90"/>
    </location>
</feature>
<feature type="helix" evidence="8">
    <location>
        <begin position="94"/>
        <end position="108"/>
    </location>
</feature>
<evidence type="ECO:0000255" key="1">
    <source>
        <dbReference type="PROSITE-ProRule" id="PRU00145"/>
    </source>
</evidence>
<evidence type="ECO:0000269" key="2">
    <source>
    </source>
</evidence>
<evidence type="ECO:0000269" key="3">
    <source>
    </source>
</evidence>
<evidence type="ECO:0000303" key="4">
    <source>
    </source>
</evidence>
<evidence type="ECO:0000303" key="5">
    <source>
    </source>
</evidence>
<evidence type="ECO:0000303" key="6">
    <source ref="2"/>
</evidence>
<evidence type="ECO:0000305" key="7"/>
<evidence type="ECO:0007829" key="8">
    <source>
        <dbReference type="PDB" id="3AJ4"/>
    </source>
</evidence>
<dbReference type="EMBL" id="AK000790">
    <property type="protein sequence ID" value="BAA91379.1"/>
    <property type="molecule type" value="mRNA"/>
</dbReference>
<dbReference type="EMBL" id="AK123710">
    <property type="protein sequence ID" value="BAG53942.1"/>
    <property type="molecule type" value="mRNA"/>
</dbReference>
<dbReference type="EMBL" id="AK293880">
    <property type="protein sequence ID" value="BAG57269.1"/>
    <property type="molecule type" value="mRNA"/>
</dbReference>
<dbReference type="EMBL" id="AK302770">
    <property type="protein sequence ID" value="BAG63978.1"/>
    <property type="molecule type" value="mRNA"/>
</dbReference>
<dbReference type="EMBL" id="AK223338">
    <property type="protein sequence ID" value="BAD97058.1"/>
    <property type="molecule type" value="mRNA"/>
</dbReference>
<dbReference type="EMBL" id="AC073869">
    <property type="status" value="NOT_ANNOTATED_CDS"/>
    <property type="molecule type" value="Genomic_DNA"/>
</dbReference>
<dbReference type="EMBL" id="AC131180">
    <property type="status" value="NOT_ANNOTATED_CDS"/>
    <property type="molecule type" value="Genomic_DNA"/>
</dbReference>
<dbReference type="EMBL" id="AC009477">
    <property type="protein sequence ID" value="AAX93135.1"/>
    <property type="molecule type" value="Genomic_DNA"/>
</dbReference>
<dbReference type="EMBL" id="CH471250">
    <property type="protein sequence ID" value="EAW51261.1"/>
    <property type="molecule type" value="Genomic_DNA"/>
</dbReference>
<dbReference type="EMBL" id="CH471250">
    <property type="protein sequence ID" value="EAW51263.1"/>
    <property type="molecule type" value="Genomic_DNA"/>
</dbReference>
<dbReference type="EMBL" id="CH471250">
    <property type="protein sequence ID" value="EAW51266.1"/>
    <property type="molecule type" value="Genomic_DNA"/>
</dbReference>
<dbReference type="EMBL" id="BC001428">
    <property type="protein sequence ID" value="AAH01428.1"/>
    <property type="molecule type" value="mRNA"/>
</dbReference>
<dbReference type="EMBL" id="BC013991">
    <property type="protein sequence ID" value="AAH13991.1"/>
    <property type="molecule type" value="mRNA"/>
</dbReference>
<dbReference type="EMBL" id="BC050695">
    <property type="protein sequence ID" value="AAH50695.2"/>
    <property type="molecule type" value="mRNA"/>
</dbReference>
<dbReference type="CCDS" id="CCDS2166.1">
    <molecule id="Q96CS7-3"/>
</dbReference>
<dbReference type="CCDS" id="CCDS46413.1">
    <molecule id="Q96CS7-1"/>
</dbReference>
<dbReference type="CCDS" id="CCDS58729.1">
    <molecule id="Q96CS7-5"/>
</dbReference>
<dbReference type="CCDS" id="CCDS58730.1">
    <molecule id="Q96CS7-6"/>
</dbReference>
<dbReference type="CCDS" id="CCDS58731.1">
    <molecule id="Q96CS7-4"/>
</dbReference>
<dbReference type="RefSeq" id="NP_001094093.1">
    <molecule id="Q96CS7-1"/>
    <property type="nucleotide sequence ID" value="NM_001100623.2"/>
</dbReference>
<dbReference type="RefSeq" id="NP_001253991.1">
    <property type="nucleotide sequence ID" value="NM_001267062.1"/>
</dbReference>
<dbReference type="RefSeq" id="NP_001253992.1">
    <property type="nucleotide sequence ID" value="NM_001267063.1"/>
</dbReference>
<dbReference type="RefSeq" id="NP_001253993.1">
    <property type="nucleotide sequence ID" value="NM_001267064.1"/>
</dbReference>
<dbReference type="RefSeq" id="NP_001253994.1">
    <molecule id="Q96CS7-6"/>
    <property type="nucleotide sequence ID" value="NM_001267065.2"/>
</dbReference>
<dbReference type="RefSeq" id="NP_001253995.1">
    <molecule id="Q96CS7-5"/>
    <property type="nucleotide sequence ID" value="NM_001267066.2"/>
</dbReference>
<dbReference type="RefSeq" id="NP_001253996.1">
    <property type="nucleotide sequence ID" value="NM_001267067.1"/>
</dbReference>
<dbReference type="RefSeq" id="NP_001253997.1">
    <molecule id="Q96CS7-4"/>
    <property type="nucleotide sequence ID" value="NM_001267068.2"/>
</dbReference>
<dbReference type="RefSeq" id="NP_001296377.1">
    <property type="nucleotide sequence ID" value="NM_001309448.1"/>
</dbReference>
<dbReference type="RefSeq" id="NP_001296379.1">
    <property type="nucleotide sequence ID" value="NM_001309450.1"/>
</dbReference>
<dbReference type="RefSeq" id="NP_001296380.1">
    <property type="nucleotide sequence ID" value="NM_001309451.1"/>
</dbReference>
<dbReference type="RefSeq" id="NP_001296381.1">
    <property type="nucleotide sequence ID" value="NM_001309452.1"/>
</dbReference>
<dbReference type="RefSeq" id="NP_060428.2">
    <molecule id="Q96CS7-3"/>
    <property type="nucleotide sequence ID" value="NM_017958.3"/>
</dbReference>
<dbReference type="RefSeq" id="XP_016859900.1">
    <property type="nucleotide sequence ID" value="XM_017004411.1"/>
</dbReference>
<dbReference type="RefSeq" id="XP_016859901.1">
    <property type="nucleotide sequence ID" value="XM_017004412.1"/>
</dbReference>
<dbReference type="PDB" id="3AJ4">
    <property type="method" value="X-ray"/>
    <property type="resolution" value="1.00 A"/>
    <property type="chains" value="A/B=1-110"/>
</dbReference>
<dbReference type="PDB" id="3VIA">
    <property type="method" value="X-ray"/>
    <property type="resolution" value="1.75 A"/>
    <property type="chains" value="A/B=1-110"/>
</dbReference>
<dbReference type="PDBsum" id="3AJ4"/>
<dbReference type="PDBsum" id="3VIA"/>
<dbReference type="SMR" id="Q96CS7"/>
<dbReference type="BioGRID" id="120370">
    <property type="interactions" value="76"/>
</dbReference>
<dbReference type="FunCoup" id="Q96CS7">
    <property type="interactions" value="533"/>
</dbReference>
<dbReference type="IntAct" id="Q96CS7">
    <property type="interactions" value="61"/>
</dbReference>
<dbReference type="MINT" id="Q96CS7"/>
<dbReference type="STRING" id="9606.ENSP00000385892"/>
<dbReference type="iPTMnet" id="Q96CS7"/>
<dbReference type="PhosphoSitePlus" id="Q96CS7"/>
<dbReference type="BioMuta" id="PLEKHB2"/>
<dbReference type="DMDM" id="48474928"/>
<dbReference type="jPOST" id="Q96CS7"/>
<dbReference type="MassIVE" id="Q96CS7"/>
<dbReference type="PaxDb" id="9606-ENSP00000385892"/>
<dbReference type="PeptideAtlas" id="Q96CS7"/>
<dbReference type="ProteomicsDB" id="3999"/>
<dbReference type="ProteomicsDB" id="5574"/>
<dbReference type="ProteomicsDB" id="7407"/>
<dbReference type="ProteomicsDB" id="76216">
    <molecule id="Q96CS7-1"/>
</dbReference>
<dbReference type="ProteomicsDB" id="76217">
    <molecule id="Q96CS7-2"/>
</dbReference>
<dbReference type="ProteomicsDB" id="76218">
    <molecule id="Q96CS7-3"/>
</dbReference>
<dbReference type="Pumba" id="Q96CS7"/>
<dbReference type="Antibodypedia" id="35075">
    <property type="antibodies" value="65 antibodies from 20 providers"/>
</dbReference>
<dbReference type="DNASU" id="55041"/>
<dbReference type="Ensembl" id="ENST00000234115.10">
    <molecule id="Q96CS7-3"/>
    <property type="protein sequence ID" value="ENSP00000234115.6"/>
    <property type="gene ID" value="ENSG00000115762.17"/>
</dbReference>
<dbReference type="Ensembl" id="ENST00000409158.5">
    <molecule id="Q96CS7-6"/>
    <property type="protein sequence ID" value="ENSP00000386410.1"/>
    <property type="gene ID" value="ENSG00000115762.17"/>
</dbReference>
<dbReference type="Ensembl" id="ENST00000409279.1">
    <molecule id="Q96CS7-1"/>
    <property type="protein sequence ID" value="ENSP00000386666.1"/>
    <property type="gene ID" value="ENSG00000115762.17"/>
</dbReference>
<dbReference type="Ensembl" id="ENST00000409612.5">
    <molecule id="Q96CS7-1"/>
    <property type="protein sequence ID" value="ENSP00000386662.1"/>
    <property type="gene ID" value="ENSG00000115762.17"/>
</dbReference>
<dbReference type="Ensembl" id="ENST00000438882.6">
    <molecule id="Q96CS7-5"/>
    <property type="protein sequence ID" value="ENSP00000401193.2"/>
    <property type="gene ID" value="ENSG00000115762.17"/>
</dbReference>
<dbReference type="Ensembl" id="ENST00000628582.2">
    <molecule id="Q96CS7-4"/>
    <property type="protein sequence ID" value="ENSP00000487321.1"/>
    <property type="gene ID" value="ENSG00000115762.17"/>
</dbReference>
<dbReference type="Ensembl" id="ENST00000693505.1">
    <molecule id="Q96CS7-1"/>
    <property type="protein sequence ID" value="ENSP00000510611.1"/>
    <property type="gene ID" value="ENSG00000115762.17"/>
</dbReference>
<dbReference type="GeneID" id="55041"/>
<dbReference type="KEGG" id="hsa:55041"/>
<dbReference type="MANE-Select" id="ENST00000693505.1">
    <property type="protein sequence ID" value="ENSP00000510611.1"/>
    <property type="RefSeq nucleotide sequence ID" value="NM_001100623.2"/>
    <property type="RefSeq protein sequence ID" value="NP_001094093.1"/>
</dbReference>
<dbReference type="UCSC" id="uc002tsf.5">
    <molecule id="Q96CS7-1"/>
    <property type="organism name" value="human"/>
</dbReference>
<dbReference type="AGR" id="HGNC:19236"/>
<dbReference type="CTD" id="55041"/>
<dbReference type="DisGeNET" id="55041"/>
<dbReference type="GeneCards" id="PLEKHB2"/>
<dbReference type="HGNC" id="HGNC:19236">
    <property type="gene designation" value="PLEKHB2"/>
</dbReference>
<dbReference type="HPA" id="ENSG00000115762">
    <property type="expression patterns" value="Low tissue specificity"/>
</dbReference>
<dbReference type="MIM" id="618452">
    <property type="type" value="gene"/>
</dbReference>
<dbReference type="neXtProt" id="NX_Q96CS7"/>
<dbReference type="OpenTargets" id="ENSG00000115762"/>
<dbReference type="PharmGKB" id="PA134885873"/>
<dbReference type="VEuPathDB" id="HostDB:ENSG00000115762"/>
<dbReference type="eggNOG" id="ENOG502S9ZQ">
    <property type="taxonomic scope" value="Eukaryota"/>
</dbReference>
<dbReference type="GeneTree" id="ENSGT00390000013989"/>
<dbReference type="HOGENOM" id="CLU_1510070_0_0_1"/>
<dbReference type="InParanoid" id="Q96CS7"/>
<dbReference type="OMA" id="YIGSEVM"/>
<dbReference type="OrthoDB" id="2157866at2759"/>
<dbReference type="PAN-GO" id="Q96CS7">
    <property type="GO annotations" value="2 GO annotations based on evolutionary models"/>
</dbReference>
<dbReference type="PhylomeDB" id="Q96CS7"/>
<dbReference type="TreeFam" id="TF331787"/>
<dbReference type="PathwayCommons" id="Q96CS7"/>
<dbReference type="SignaLink" id="Q96CS7"/>
<dbReference type="BioGRID-ORCS" id="55041">
    <property type="hits" value="8 hits in 1155 CRISPR screens"/>
</dbReference>
<dbReference type="ChiTaRS" id="PLEKHB2">
    <property type="organism name" value="human"/>
</dbReference>
<dbReference type="EvolutionaryTrace" id="Q96CS7"/>
<dbReference type="GeneWiki" id="PLEKHB2"/>
<dbReference type="GenomeRNAi" id="55041"/>
<dbReference type="Pharos" id="Q96CS7">
    <property type="development level" value="Tbio"/>
</dbReference>
<dbReference type="PRO" id="PR:Q96CS7"/>
<dbReference type="Proteomes" id="UP000005640">
    <property type="component" value="Chromosome 2"/>
</dbReference>
<dbReference type="RNAct" id="Q96CS7">
    <property type="molecule type" value="protein"/>
</dbReference>
<dbReference type="Bgee" id="ENSG00000115762">
    <property type="expression patterns" value="Expressed in pons and 209 other cell types or tissues"/>
</dbReference>
<dbReference type="ExpressionAtlas" id="Q96CS7">
    <property type="expression patterns" value="baseline and differential"/>
</dbReference>
<dbReference type="GO" id="GO:0016020">
    <property type="term" value="C:membrane"/>
    <property type="evidence" value="ECO:0000318"/>
    <property type="project" value="GO_Central"/>
</dbReference>
<dbReference type="GO" id="GO:0055038">
    <property type="term" value="C:recycling endosome membrane"/>
    <property type="evidence" value="ECO:0007669"/>
    <property type="project" value="UniProtKB-SubCell"/>
</dbReference>
<dbReference type="GO" id="GO:0005547">
    <property type="term" value="F:phosphatidylinositol-3,4,5-trisphosphate binding"/>
    <property type="evidence" value="ECO:0000314"/>
    <property type="project" value="GO_Central"/>
</dbReference>
<dbReference type="GO" id="GO:0045595">
    <property type="term" value="P:regulation of cell differentiation"/>
    <property type="evidence" value="ECO:0000318"/>
    <property type="project" value="GO_Central"/>
</dbReference>
<dbReference type="CDD" id="cd13265">
    <property type="entry name" value="PH_evt"/>
    <property type="match status" value="1"/>
</dbReference>
<dbReference type="FunFam" id="2.30.29.30:FF:000073">
    <property type="entry name" value="Pleckstrin homology domain-containing family B member 2"/>
    <property type="match status" value="1"/>
</dbReference>
<dbReference type="Gene3D" id="2.30.29.30">
    <property type="entry name" value="Pleckstrin-homology domain (PH domain)/Phosphotyrosine-binding domain (PTB)"/>
    <property type="match status" value="1"/>
</dbReference>
<dbReference type="InterPro" id="IPR011993">
    <property type="entry name" value="PH-like_dom_sf"/>
</dbReference>
<dbReference type="InterPro" id="IPR001849">
    <property type="entry name" value="PH_domain"/>
</dbReference>
<dbReference type="InterPro" id="IPR039680">
    <property type="entry name" value="PLEKHB1/2"/>
</dbReference>
<dbReference type="PANTHER" id="PTHR14309">
    <property type="entry name" value="EXPRESSED PROTEIN"/>
    <property type="match status" value="1"/>
</dbReference>
<dbReference type="PANTHER" id="PTHR14309:SF8">
    <property type="entry name" value="PLECKSTRIN HOMOLOGY DOMAIN-CONTAINING FAMILY B MEMBER 2"/>
    <property type="match status" value="1"/>
</dbReference>
<dbReference type="Pfam" id="PF00169">
    <property type="entry name" value="PH"/>
    <property type="match status" value="1"/>
</dbReference>
<dbReference type="SMART" id="SM00233">
    <property type="entry name" value="PH"/>
    <property type="match status" value="1"/>
</dbReference>
<dbReference type="SUPFAM" id="SSF50729">
    <property type="entry name" value="PH domain-like"/>
    <property type="match status" value="1"/>
</dbReference>
<dbReference type="PROSITE" id="PS50003">
    <property type="entry name" value="PH_DOMAIN"/>
    <property type="match status" value="1"/>
</dbReference>
<keyword id="KW-0002">3D-structure</keyword>
<keyword id="KW-0025">Alternative splicing</keyword>
<keyword id="KW-0967">Endosome</keyword>
<keyword id="KW-0472">Membrane</keyword>
<keyword id="KW-1267">Proteomics identification</keyword>
<keyword id="KW-1185">Reference proteome</keyword>
<accession>Q96CS7</accession>
<accession>B4DF08</accession>
<accession>B4DZ66</accession>
<accession>B8ZZN1</accession>
<accession>Q53FF1</accession>
<accession>Q53TH7</accession>
<accession>Q86W37</accession>
<accession>Q9BV75</accession>
<accession>Q9NWK1</accession>
<gene>
    <name type="primary">PLEKHB2</name>
    <name type="synonym">EVT2</name>
</gene>
<proteinExistence type="evidence at protein level"/>
<sequence length="222" mass="24736">MAFVKSGWLLRQSTILKRWKKNWFDLWSDGHLIYYDDQTRQNIEDKVHMPMDCINIRTGQECRDTQPPDGKSKDCMLQIVCRDGKTISLCAESTDDCLAWKFTLQDSRTNTAYVGSAVMTDETSVVSSPPPYTAYAAPAPEQAYGYGPYGGAYPPGTQVVYAANGQAYAVPYQYPYAGLYGQQPANQVIIRERYRDNDSDLALGMLAGAATGMALGSLFWVF</sequence>
<organism>
    <name type="scientific">Homo sapiens</name>
    <name type="common">Human</name>
    <dbReference type="NCBI Taxonomy" id="9606"/>
    <lineage>
        <taxon>Eukaryota</taxon>
        <taxon>Metazoa</taxon>
        <taxon>Chordata</taxon>
        <taxon>Craniata</taxon>
        <taxon>Vertebrata</taxon>
        <taxon>Euteleostomi</taxon>
        <taxon>Mammalia</taxon>
        <taxon>Eutheria</taxon>
        <taxon>Euarchontoglires</taxon>
        <taxon>Primates</taxon>
        <taxon>Haplorrhini</taxon>
        <taxon>Catarrhini</taxon>
        <taxon>Hominidae</taxon>
        <taxon>Homo</taxon>
    </lineage>
</organism>
<protein>
    <recommendedName>
        <fullName>Pleckstrin homology domain-containing family B member 2</fullName>
        <shortName>PH domain-containing family B member 2</shortName>
    </recommendedName>
    <alternativeName>
        <fullName>Evectin-2</fullName>
    </alternativeName>
</protein>
<name>PKHB2_HUMAN</name>
<comment type="function">
    <text evidence="2 3">Involved in retrograde transport of recycling endosomes.</text>
</comment>
<comment type="interaction">
    <interactant intactId="EBI-373552">
        <id>Q96CS7</id>
    </interactant>
    <interactant intactId="EBI-711810">
        <id>O14503</id>
        <label>BHLHE40</label>
    </interactant>
    <organismsDiffer>false</organismsDiffer>
    <experiments>3</experiments>
</comment>
<comment type="interaction">
    <interactant intactId="EBI-373552">
        <id>Q96CS7</id>
    </interactant>
    <interactant intactId="EBI-946029">
        <id>Q6P1W5</id>
        <label>C1orf94</label>
    </interactant>
    <organismsDiffer>false</organismsDiffer>
    <experiments>6</experiments>
</comment>
<comment type="interaction">
    <interactant intactId="EBI-373552">
        <id>Q96CS7</id>
    </interactant>
    <interactant intactId="EBI-2826276">
        <id>P34810</id>
        <label>CD68</label>
    </interactant>
    <organismsDiffer>false</organismsDiffer>
    <experiments>3</experiments>
</comment>
<comment type="interaction">
    <interactant intactId="EBI-373552">
        <id>Q96CS7</id>
    </interactant>
    <interactant intactId="EBI-9250559">
        <id>P32320</id>
        <label>CDA</label>
    </interactant>
    <organismsDiffer>false</organismsDiffer>
    <experiments>6</experiments>
</comment>
<comment type="interaction">
    <interactant intactId="EBI-373552">
        <id>Q96CS7</id>
    </interactant>
    <interactant intactId="EBI-12256978">
        <id>Q8N6F1-2</id>
        <label>CLDN19</label>
    </interactant>
    <organismsDiffer>false</organismsDiffer>
    <experiments>3</experiments>
</comment>
<comment type="interaction">
    <interactant intactId="EBI-373552">
        <id>Q96CS7</id>
    </interactant>
    <interactant intactId="EBI-724310">
        <id>Q15038</id>
        <label>DAZAP2</label>
    </interactant>
    <organismsDiffer>false</organismsDiffer>
    <experiments>11</experiments>
</comment>
<comment type="interaction">
    <interactant intactId="EBI-373552">
        <id>Q96CS7</id>
    </interactant>
    <interactant intactId="EBI-740086">
        <id>Q96GG9</id>
        <label>DCUN1D1</label>
    </interactant>
    <organismsDiffer>false</organismsDiffer>
    <experiments>5</experiments>
</comment>
<comment type="interaction">
    <interactant intactId="EBI-373552">
        <id>Q96CS7</id>
    </interactant>
    <interactant intactId="EBI-4319440">
        <id>P54849</id>
        <label>EMP1</label>
    </interactant>
    <organismsDiffer>false</organismsDiffer>
    <experiments>3</experiments>
</comment>
<comment type="interaction">
    <interactant intactId="EBI-373552">
        <id>Q96CS7</id>
    </interactant>
    <interactant intactId="EBI-3907816">
        <id>P54852</id>
        <label>EMP3</label>
    </interactant>
    <organismsDiffer>false</organismsDiffer>
    <experiments>3</experiments>
</comment>
<comment type="interaction">
    <interactant intactId="EBI-373552">
        <id>Q96CS7</id>
    </interactant>
    <interactant intactId="EBI-713198">
        <id>Q9Y6I3</id>
        <label>EPN1</label>
    </interactant>
    <organismsDiffer>false</organismsDiffer>
    <experiments>3</experiments>
</comment>
<comment type="interaction">
    <interactant intactId="EBI-373552">
        <id>Q96CS7</id>
    </interactant>
    <interactant intactId="EBI-12135243">
        <id>O95208-2</id>
        <label>EPN2</label>
    </interactant>
    <organismsDiffer>false</organismsDiffer>
    <experiments>3</experiments>
</comment>
<comment type="interaction">
    <interactant intactId="EBI-373552">
        <id>Q96CS7</id>
    </interactant>
    <interactant intactId="EBI-11978259">
        <id>Q92567-2</id>
        <label>FAM168A</label>
    </interactant>
    <organismsDiffer>false</organismsDiffer>
    <experiments>3</experiments>
</comment>
<comment type="interaction">
    <interactant intactId="EBI-373552">
        <id>Q96CS7</id>
    </interactant>
    <interactant intactId="EBI-11961494">
        <id>Q6VB84</id>
        <label>FOXD4L3</label>
    </interactant>
    <organismsDiffer>false</organismsDiffer>
    <experiments>3</experiments>
</comment>
<comment type="interaction">
    <interactant intactId="EBI-373552">
        <id>Q96CS7</id>
    </interactant>
    <interactant intactId="EBI-12075758">
        <id>Q9NZ52-2</id>
        <label>GGA3</label>
    </interactant>
    <organismsDiffer>false</organismsDiffer>
    <experiments>3</experiments>
</comment>
<comment type="interaction">
    <interactant intactId="EBI-373552">
        <id>Q96CS7</id>
    </interactant>
    <interactant intactId="EBI-3905204">
        <id>P29033</id>
        <label>GJB2</label>
    </interactant>
    <organismsDiffer>false</organismsDiffer>
    <experiments>3</experiments>
</comment>
<comment type="interaction">
    <interactant intactId="EBI-373552">
        <id>Q96CS7</id>
    </interactant>
    <interactant intactId="EBI-7251368">
        <id>Q9BZE0</id>
        <label>GLIS2</label>
    </interactant>
    <organismsDiffer>false</organismsDiffer>
    <experiments>5</experiments>
</comment>
<comment type="interaction">
    <interactant intactId="EBI-373552">
        <id>Q96CS7</id>
    </interactant>
    <interactant intactId="EBI-7231130">
        <id>Q9Y5J3</id>
        <label>HEY1</label>
    </interactant>
    <organismsDiffer>false</organismsDiffer>
    <experiments>3</experiments>
</comment>
<comment type="interaction">
    <interactant intactId="EBI-373552">
        <id>Q96CS7</id>
    </interactant>
    <interactant intactId="EBI-751092">
        <id>Q9NQ87</id>
        <label>HEYL</label>
    </interactant>
    <organismsDiffer>false</organismsDiffer>
    <experiments>3</experiments>
</comment>
<comment type="interaction">
    <interactant intactId="EBI-373552">
        <id>Q96CS7</id>
    </interactant>
    <interactant intactId="EBI-740220">
        <id>O14964</id>
        <label>HGS</label>
    </interactant>
    <organismsDiffer>false</organismsDiffer>
    <experiments>3</experiments>
</comment>
<comment type="interaction">
    <interactant intactId="EBI-373552">
        <id>Q96CS7</id>
    </interactant>
    <interactant intactId="EBI-394558">
        <id>Q71SY5</id>
        <label>MED25</label>
    </interactant>
    <organismsDiffer>false</organismsDiffer>
    <experiments>3</experiments>
</comment>
<comment type="interaction">
    <interactant intactId="EBI-373552">
        <id>Q96CS7</id>
    </interactant>
    <interactant intactId="EBI-11980301">
        <id>Q8N3F0</id>
        <label>MTURN</label>
    </interactant>
    <organismsDiffer>false</organismsDiffer>
    <experiments>5</experiments>
</comment>
<comment type="interaction">
    <interactant intactId="EBI-373552">
        <id>Q96CS7</id>
    </interactant>
    <interactant intactId="EBI-741158">
        <id>Q96HA8</id>
        <label>NTAQ1</label>
    </interactant>
    <organismsDiffer>false</organismsDiffer>
    <experiments>5</experiments>
</comment>
<comment type="interaction">
    <interactant intactId="EBI-373552">
        <id>Q96CS7</id>
    </interactant>
    <interactant intactId="EBI-746259">
        <id>Q96DC9</id>
        <label>OTUB2</label>
    </interactant>
    <organismsDiffer>false</organismsDiffer>
    <experiments>3</experiments>
</comment>
<comment type="interaction">
    <interactant intactId="EBI-373552">
        <id>Q96CS7</id>
    </interactant>
    <interactant intactId="EBI-6164623">
        <id>Q86T03</id>
        <label>PIP4P1</label>
    </interactant>
    <organismsDiffer>false</organismsDiffer>
    <experiments>3</experiments>
</comment>
<comment type="interaction">
    <interactant intactId="EBI-373552">
        <id>Q96CS7</id>
    </interactant>
    <interactant intactId="EBI-748265">
        <id>P78337</id>
        <label>PITX1</label>
    </interactant>
    <organismsDiffer>false</organismsDiffer>
    <experiments>3</experiments>
</comment>
<comment type="interaction">
    <interactant intactId="EBI-373552">
        <id>Q96CS7</id>
    </interactant>
    <interactant intactId="EBI-1389308">
        <id>Q7Z3K3</id>
        <label>POGZ</label>
    </interactant>
    <organismsDiffer>false</organismsDiffer>
    <experiments>3</experiments>
</comment>
<comment type="interaction">
    <interactant intactId="EBI-373552">
        <id>Q96CS7</id>
    </interactant>
    <interactant intactId="EBI-9027467">
        <id>O75360</id>
        <label>PROP1</label>
    </interactant>
    <organismsDiffer>false</organismsDiffer>
    <experiments>3</experiments>
</comment>
<comment type="interaction">
    <interactant intactId="EBI-373552">
        <id>Q96CS7</id>
    </interactant>
    <interactant intactId="EBI-9916444">
        <id>Q8TEB9</id>
        <label>RHBDD1</label>
    </interactant>
    <organismsDiffer>false</organismsDiffer>
    <experiments>3</experiments>
</comment>
<comment type="interaction">
    <interactant intactId="EBI-373552">
        <id>Q96CS7</id>
    </interactant>
    <interactant intactId="EBI-357375">
        <id>P62979</id>
        <label>RPS27A</label>
    </interactant>
    <organismsDiffer>false</organismsDiffer>
    <experiments>3</experiments>
</comment>
<comment type="interaction">
    <interactant intactId="EBI-373552">
        <id>Q96CS7</id>
    </interactant>
    <interactant intactId="EBI-2854842">
        <id>Q8WV19</id>
        <label>SFT2D1</label>
    </interactant>
    <organismsDiffer>false</organismsDiffer>
    <experiments>3</experiments>
</comment>
<comment type="interaction">
    <interactant intactId="EBI-373552">
        <id>Q96CS7</id>
    </interactant>
    <interactant intactId="EBI-372475">
        <id>P14678-2</id>
        <label>SNRPB</label>
    </interactant>
    <organismsDiffer>false</organismsDiffer>
    <experiments>3</experiments>
</comment>
<comment type="interaction">
    <interactant intactId="EBI-373552">
        <id>Q96CS7</id>
    </interactant>
    <interactant intactId="EBI-373258">
        <id>O75886</id>
        <label>STAM2</label>
    </interactant>
    <organismsDiffer>false</organismsDiffer>
    <experiments>6</experiments>
</comment>
<comment type="interaction">
    <interactant intactId="EBI-373552">
        <id>Q96CS7</id>
    </interactant>
    <interactant intactId="EBI-12187159">
        <id>O43759-2</id>
        <label>SYNGR1</label>
    </interactant>
    <organismsDiffer>false</organismsDiffer>
    <experiments>3</experiments>
</comment>
<comment type="interaction">
    <interactant intactId="EBI-373552">
        <id>Q96CS7</id>
    </interactant>
    <interactant intactId="EBI-529518">
        <id>Q86VP1</id>
        <label>TAX1BP1</label>
    </interactant>
    <organismsDiffer>false</organismsDiffer>
    <experiments>3</experiments>
</comment>
<comment type="interaction">
    <interactant intactId="EBI-373552">
        <id>Q96CS7</id>
    </interactant>
    <interactant intactId="EBI-11988865">
        <id>A5PKU2</id>
        <label>TUSC5</label>
    </interactant>
    <organismsDiffer>false</organismsDiffer>
    <experiments>3</experiments>
</comment>
<comment type="interaction">
    <interactant intactId="EBI-373552">
        <id>Q96CS7</id>
    </interactant>
    <interactant intactId="EBI-357304">
        <id>P62987</id>
        <label>UBA52</label>
    </interactant>
    <organismsDiffer>false</organismsDiffer>
    <experiments>3</experiments>
</comment>
<comment type="interaction">
    <interactant intactId="EBI-373552">
        <id>Q96CS7</id>
    </interactant>
    <interactant intactId="EBI-749370">
        <id>Q9BSL1</id>
        <label>UBAC1</label>
    </interactant>
    <organismsDiffer>false</organismsDiffer>
    <experiments>3</experiments>
</comment>
<comment type="interaction">
    <interactant intactId="EBI-373552">
        <id>Q96CS7</id>
    </interactant>
    <interactant intactId="EBI-2514383">
        <id>Q5T6F2</id>
        <label>UBAP2</label>
    </interactant>
    <organismsDiffer>false</organismsDiffer>
    <experiments>3</experiments>
</comment>
<comment type="interaction">
    <interactant intactId="EBI-373552">
        <id>Q96CS7</id>
    </interactant>
    <interactant intactId="EBI-7353612">
        <id>P57075-2</id>
        <label>UBASH3A</label>
    </interactant>
    <organismsDiffer>false</organismsDiffer>
    <experiments>3</experiments>
</comment>
<comment type="interaction">
    <interactant intactId="EBI-373552">
        <id>Q96CS7</id>
    </interactant>
    <interactant intactId="EBI-413034">
        <id>P0CG47</id>
        <label>UBB</label>
    </interactant>
    <organismsDiffer>false</organismsDiffer>
    <experiments>3</experiments>
</comment>
<comment type="interaction">
    <interactant intactId="EBI-373552">
        <id>Q96CS7</id>
    </interactant>
    <interactant intactId="EBI-3390054">
        <id>P0CG48</id>
        <label>UBC</label>
    </interactant>
    <organismsDiffer>false</organismsDiffer>
    <experiments>3</experiments>
</comment>
<comment type="interaction">
    <interactant intactId="EBI-373552">
        <id>Q96CS7</id>
    </interactant>
    <interactant intactId="EBI-947187">
        <id>Q9UHD9</id>
        <label>UBQLN2</label>
    </interactant>
    <organismsDiffer>false</organismsDiffer>
    <experiments>3</experiments>
</comment>
<comment type="interaction">
    <interactant intactId="EBI-373552">
        <id>Q96CS7</id>
    </interactant>
    <interactant intactId="EBI-1993899">
        <id>Q9BZV1</id>
        <label>UBXN6</label>
    </interactant>
    <organismsDiffer>false</organismsDiffer>
    <experiments>5</experiments>
</comment>
<comment type="interaction">
    <interactant intactId="EBI-373552">
        <id>Q96CS7</id>
    </interactant>
    <interactant intactId="EBI-2510804">
        <id>Q5VVQ6</id>
        <label>YOD1</label>
    </interactant>
    <organismsDiffer>false</organismsDiffer>
    <experiments>5</experiments>
</comment>
<comment type="interaction">
    <interactant intactId="EBI-373552">
        <id>Q96CS7</id>
    </interactant>
    <interactant intactId="EBI-3921109">
        <id>Q8N6M9</id>
        <label>ZFAND2A</label>
    </interactant>
    <organismsDiffer>false</organismsDiffer>
    <experiments>3</experiments>
</comment>
<comment type="subcellular location">
    <subcellularLocation>
        <location evidence="2 3">Recycling endosome membrane</location>
        <topology evidence="2 3">Peripheral membrane protein</topology>
    </subcellularLocation>
    <text>Specifically detected in tubulovesicular structures, and colocalizes with TFNR.</text>
</comment>
<comment type="alternative products">
    <event type="alternative splicing"/>
    <isoform>
        <id>Q96CS7-1</id>
        <name>1</name>
        <sequence type="displayed"/>
    </isoform>
    <isoform>
        <id>Q96CS7-2</id>
        <name>2</name>
        <sequence type="described" ref="VSP_009783"/>
    </isoform>
    <isoform>
        <id>Q96CS7-3</id>
        <name>3</name>
        <sequence type="described" ref="VSP_009784"/>
    </isoform>
    <isoform>
        <id>Q96CS7-4</id>
        <name>4</name>
        <sequence type="described" ref="VSP_045163"/>
    </isoform>
    <isoform>
        <id>Q96CS7-5</id>
        <name>5</name>
        <sequence type="described" ref="VSP_045164"/>
    </isoform>
    <isoform>
        <id>Q96CS7-6</id>
        <name>6</name>
        <sequence type="described" ref="VSP_047118"/>
    </isoform>
</comment>
<comment type="domain">
    <text>The PH domain specifically binds phosphatidylserine, which is enriched in recycling endosome membranes, it doesn't recognize PIPs.</text>
</comment>
<reference key="1">
    <citation type="journal article" date="2004" name="Nat. Genet.">
        <title>Complete sequencing and characterization of 21,243 full-length human cDNAs.</title>
        <authorList>
            <person name="Ota T."/>
            <person name="Suzuki Y."/>
            <person name="Nishikawa T."/>
            <person name="Otsuki T."/>
            <person name="Sugiyama T."/>
            <person name="Irie R."/>
            <person name="Wakamatsu A."/>
            <person name="Hayashi K."/>
            <person name="Sato H."/>
            <person name="Nagai K."/>
            <person name="Kimura K."/>
            <person name="Makita H."/>
            <person name="Sekine M."/>
            <person name="Obayashi M."/>
            <person name="Nishi T."/>
            <person name="Shibahara T."/>
            <person name="Tanaka T."/>
            <person name="Ishii S."/>
            <person name="Yamamoto J."/>
            <person name="Saito K."/>
            <person name="Kawai Y."/>
            <person name="Isono Y."/>
            <person name="Nakamura Y."/>
            <person name="Nagahari K."/>
            <person name="Murakami K."/>
            <person name="Yasuda T."/>
            <person name="Iwayanagi T."/>
            <person name="Wagatsuma M."/>
            <person name="Shiratori A."/>
            <person name="Sudo H."/>
            <person name="Hosoiri T."/>
            <person name="Kaku Y."/>
            <person name="Kodaira H."/>
            <person name="Kondo H."/>
            <person name="Sugawara M."/>
            <person name="Takahashi M."/>
            <person name="Kanda K."/>
            <person name="Yokoi T."/>
            <person name="Furuya T."/>
            <person name="Kikkawa E."/>
            <person name="Omura Y."/>
            <person name="Abe K."/>
            <person name="Kamihara K."/>
            <person name="Katsuta N."/>
            <person name="Sato K."/>
            <person name="Tanikawa M."/>
            <person name="Yamazaki M."/>
            <person name="Ninomiya K."/>
            <person name="Ishibashi T."/>
            <person name="Yamashita H."/>
            <person name="Murakawa K."/>
            <person name="Fujimori K."/>
            <person name="Tanai H."/>
            <person name="Kimata M."/>
            <person name="Watanabe M."/>
            <person name="Hiraoka S."/>
            <person name="Chiba Y."/>
            <person name="Ishida S."/>
            <person name="Ono Y."/>
            <person name="Takiguchi S."/>
            <person name="Watanabe S."/>
            <person name="Yosida M."/>
            <person name="Hotuta T."/>
            <person name="Kusano J."/>
            <person name="Kanehori K."/>
            <person name="Takahashi-Fujii A."/>
            <person name="Hara H."/>
            <person name="Tanase T.-O."/>
            <person name="Nomura Y."/>
            <person name="Togiya S."/>
            <person name="Komai F."/>
            <person name="Hara R."/>
            <person name="Takeuchi K."/>
            <person name="Arita M."/>
            <person name="Imose N."/>
            <person name="Musashino K."/>
            <person name="Yuuki H."/>
            <person name="Oshima A."/>
            <person name="Sasaki N."/>
            <person name="Aotsuka S."/>
            <person name="Yoshikawa Y."/>
            <person name="Matsunawa H."/>
            <person name="Ichihara T."/>
            <person name="Shiohata N."/>
            <person name="Sano S."/>
            <person name="Moriya S."/>
            <person name="Momiyama H."/>
            <person name="Satoh N."/>
            <person name="Takami S."/>
            <person name="Terashima Y."/>
            <person name="Suzuki O."/>
            <person name="Nakagawa S."/>
            <person name="Senoh A."/>
            <person name="Mizoguchi H."/>
            <person name="Goto Y."/>
            <person name="Shimizu F."/>
            <person name="Wakebe H."/>
            <person name="Hishigaki H."/>
            <person name="Watanabe T."/>
            <person name="Sugiyama A."/>
            <person name="Takemoto M."/>
            <person name="Kawakami B."/>
            <person name="Yamazaki M."/>
            <person name="Watanabe K."/>
            <person name="Kumagai A."/>
            <person name="Itakura S."/>
            <person name="Fukuzumi Y."/>
            <person name="Fujimori Y."/>
            <person name="Komiyama M."/>
            <person name="Tashiro H."/>
            <person name="Tanigami A."/>
            <person name="Fujiwara T."/>
            <person name="Ono T."/>
            <person name="Yamada K."/>
            <person name="Fujii Y."/>
            <person name="Ozaki K."/>
            <person name="Hirao M."/>
            <person name="Ohmori Y."/>
            <person name="Kawabata A."/>
            <person name="Hikiji T."/>
            <person name="Kobatake N."/>
            <person name="Inagaki H."/>
            <person name="Ikema Y."/>
            <person name="Okamoto S."/>
            <person name="Okitani R."/>
            <person name="Kawakami T."/>
            <person name="Noguchi S."/>
            <person name="Itoh T."/>
            <person name="Shigeta K."/>
            <person name="Senba T."/>
            <person name="Matsumura K."/>
            <person name="Nakajima Y."/>
            <person name="Mizuno T."/>
            <person name="Morinaga M."/>
            <person name="Sasaki M."/>
            <person name="Togashi T."/>
            <person name="Oyama M."/>
            <person name="Hata H."/>
            <person name="Watanabe M."/>
            <person name="Komatsu T."/>
            <person name="Mizushima-Sugano J."/>
            <person name="Satoh T."/>
            <person name="Shirai Y."/>
            <person name="Takahashi Y."/>
            <person name="Nakagawa K."/>
            <person name="Okumura K."/>
            <person name="Nagase T."/>
            <person name="Nomura N."/>
            <person name="Kikuchi H."/>
            <person name="Masuho Y."/>
            <person name="Yamashita R."/>
            <person name="Nakai K."/>
            <person name="Yada T."/>
            <person name="Nakamura Y."/>
            <person name="Ohara O."/>
            <person name="Isogai T."/>
            <person name="Sugano S."/>
        </authorList>
    </citation>
    <scope>NUCLEOTIDE SEQUENCE [LARGE SCALE MRNA] (ISOFORMS 1; 3; 4 AND 5)</scope>
    <source>
        <tissue>Cerebellum</tissue>
        <tissue>Colon</tissue>
        <tissue>Lung</tissue>
        <tissue>Testis</tissue>
    </source>
</reference>
<reference key="2">
    <citation type="submission" date="2005-04" db="EMBL/GenBank/DDBJ databases">
        <authorList>
            <person name="Suzuki Y."/>
            <person name="Sugano S."/>
            <person name="Totoki Y."/>
            <person name="Toyoda A."/>
            <person name="Takeda T."/>
            <person name="Sakaki Y."/>
            <person name="Tanaka A."/>
            <person name="Yokoyama S."/>
        </authorList>
    </citation>
    <scope>NUCLEOTIDE SEQUENCE [LARGE SCALE MRNA] (ISOFORM 3)</scope>
    <source>
        <tissue>Testis</tissue>
    </source>
</reference>
<reference key="3">
    <citation type="journal article" date="2005" name="Nature">
        <title>Generation and annotation of the DNA sequences of human chromosomes 2 and 4.</title>
        <authorList>
            <person name="Hillier L.W."/>
            <person name="Graves T.A."/>
            <person name="Fulton R.S."/>
            <person name="Fulton L.A."/>
            <person name="Pepin K.H."/>
            <person name="Minx P."/>
            <person name="Wagner-McPherson C."/>
            <person name="Layman D."/>
            <person name="Wylie K."/>
            <person name="Sekhon M."/>
            <person name="Becker M.C."/>
            <person name="Fewell G.A."/>
            <person name="Delehaunty K.D."/>
            <person name="Miner T.L."/>
            <person name="Nash W.E."/>
            <person name="Kremitzki C."/>
            <person name="Oddy L."/>
            <person name="Du H."/>
            <person name="Sun H."/>
            <person name="Bradshaw-Cordum H."/>
            <person name="Ali J."/>
            <person name="Carter J."/>
            <person name="Cordes M."/>
            <person name="Harris A."/>
            <person name="Isak A."/>
            <person name="van Brunt A."/>
            <person name="Nguyen C."/>
            <person name="Du F."/>
            <person name="Courtney L."/>
            <person name="Kalicki J."/>
            <person name="Ozersky P."/>
            <person name="Abbott S."/>
            <person name="Armstrong J."/>
            <person name="Belter E.A."/>
            <person name="Caruso L."/>
            <person name="Cedroni M."/>
            <person name="Cotton M."/>
            <person name="Davidson T."/>
            <person name="Desai A."/>
            <person name="Elliott G."/>
            <person name="Erb T."/>
            <person name="Fronick C."/>
            <person name="Gaige T."/>
            <person name="Haakenson W."/>
            <person name="Haglund K."/>
            <person name="Holmes A."/>
            <person name="Harkins R."/>
            <person name="Kim K."/>
            <person name="Kruchowski S.S."/>
            <person name="Strong C.M."/>
            <person name="Grewal N."/>
            <person name="Goyea E."/>
            <person name="Hou S."/>
            <person name="Levy A."/>
            <person name="Martinka S."/>
            <person name="Mead K."/>
            <person name="McLellan M.D."/>
            <person name="Meyer R."/>
            <person name="Randall-Maher J."/>
            <person name="Tomlinson C."/>
            <person name="Dauphin-Kohlberg S."/>
            <person name="Kozlowicz-Reilly A."/>
            <person name="Shah N."/>
            <person name="Swearengen-Shahid S."/>
            <person name="Snider J."/>
            <person name="Strong J.T."/>
            <person name="Thompson J."/>
            <person name="Yoakum M."/>
            <person name="Leonard S."/>
            <person name="Pearman C."/>
            <person name="Trani L."/>
            <person name="Radionenko M."/>
            <person name="Waligorski J.E."/>
            <person name="Wang C."/>
            <person name="Rock S.M."/>
            <person name="Tin-Wollam A.-M."/>
            <person name="Maupin R."/>
            <person name="Latreille P."/>
            <person name="Wendl M.C."/>
            <person name="Yang S.-P."/>
            <person name="Pohl C."/>
            <person name="Wallis J.W."/>
            <person name="Spieth J."/>
            <person name="Bieri T.A."/>
            <person name="Berkowicz N."/>
            <person name="Nelson J.O."/>
            <person name="Osborne J."/>
            <person name="Ding L."/>
            <person name="Meyer R."/>
            <person name="Sabo A."/>
            <person name="Shotland Y."/>
            <person name="Sinha P."/>
            <person name="Wohldmann P.E."/>
            <person name="Cook L.L."/>
            <person name="Hickenbotham M.T."/>
            <person name="Eldred J."/>
            <person name="Williams D."/>
            <person name="Jones T.A."/>
            <person name="She X."/>
            <person name="Ciccarelli F.D."/>
            <person name="Izaurralde E."/>
            <person name="Taylor J."/>
            <person name="Schmutz J."/>
            <person name="Myers R.M."/>
            <person name="Cox D.R."/>
            <person name="Huang X."/>
            <person name="McPherson J.D."/>
            <person name="Mardis E.R."/>
            <person name="Clifton S.W."/>
            <person name="Warren W.C."/>
            <person name="Chinwalla A.T."/>
            <person name="Eddy S.R."/>
            <person name="Marra M.A."/>
            <person name="Ovcharenko I."/>
            <person name="Furey T.S."/>
            <person name="Miller W."/>
            <person name="Eichler E.E."/>
            <person name="Bork P."/>
            <person name="Suyama M."/>
            <person name="Torrents D."/>
            <person name="Waterston R.H."/>
            <person name="Wilson R.K."/>
        </authorList>
    </citation>
    <scope>NUCLEOTIDE SEQUENCE [LARGE SCALE GENOMIC DNA]</scope>
</reference>
<reference key="4">
    <citation type="submission" date="2005-07" db="EMBL/GenBank/DDBJ databases">
        <authorList>
            <person name="Mural R.J."/>
            <person name="Istrail S."/>
            <person name="Sutton G.G."/>
            <person name="Florea L."/>
            <person name="Halpern A.L."/>
            <person name="Mobarry C.M."/>
            <person name="Lippert R."/>
            <person name="Walenz B."/>
            <person name="Shatkay H."/>
            <person name="Dew I."/>
            <person name="Miller J.R."/>
            <person name="Flanigan M.J."/>
            <person name="Edwards N.J."/>
            <person name="Bolanos R."/>
            <person name="Fasulo D."/>
            <person name="Halldorsson B.V."/>
            <person name="Hannenhalli S."/>
            <person name="Turner R."/>
            <person name="Yooseph S."/>
            <person name="Lu F."/>
            <person name="Nusskern D.R."/>
            <person name="Shue B.C."/>
            <person name="Zheng X.H."/>
            <person name="Zhong F."/>
            <person name="Delcher A.L."/>
            <person name="Huson D.H."/>
            <person name="Kravitz S.A."/>
            <person name="Mouchard L."/>
            <person name="Reinert K."/>
            <person name="Remington K.A."/>
            <person name="Clark A.G."/>
            <person name="Waterman M.S."/>
            <person name="Eichler E.E."/>
            <person name="Adams M.D."/>
            <person name="Hunkapiller M.W."/>
            <person name="Myers E.W."/>
            <person name="Venter J.C."/>
        </authorList>
    </citation>
    <scope>NUCLEOTIDE SEQUENCE [LARGE SCALE GENOMIC DNA]</scope>
</reference>
<reference key="5">
    <citation type="journal article" date="2004" name="Genome Res.">
        <title>The status, quality, and expansion of the NIH full-length cDNA project: the Mammalian Gene Collection (MGC).</title>
        <authorList>
            <consortium name="The MGC Project Team"/>
        </authorList>
    </citation>
    <scope>NUCLEOTIDE SEQUENCE [LARGE SCALE MRNA] (ISOFORMS 1 AND 2)</scope>
    <source>
        <tissue>Pancreas</tissue>
        <tissue>Skin</tissue>
    </source>
</reference>
<reference key="6">
    <citation type="journal article" date="2011" name="Proc. Natl. Acad. Sci. U.S.A.">
        <title>Intracellular phosphatidylserine is essential for retrograde membrane traffic through endosomes.</title>
        <authorList>
            <person name="Uchida Y."/>
            <person name="Hasegawa J."/>
            <person name="Chinnapen D."/>
            <person name="Inoue T."/>
            <person name="Okazaki S."/>
            <person name="Kato R."/>
            <person name="Wakatsuki S."/>
            <person name="Misaki R."/>
            <person name="Koike M."/>
            <person name="Uchiyama Y."/>
            <person name="Iemura S."/>
            <person name="Natsume T."/>
            <person name="Kuwahara R."/>
            <person name="Nakagawa T."/>
            <person name="Nishikawa K."/>
            <person name="Mukai K."/>
            <person name="Miyoshi E."/>
            <person name="Taniguchi N."/>
            <person name="Sheff D."/>
            <person name="Lencer W.I."/>
            <person name="Taguchi T."/>
            <person name="Arai H."/>
        </authorList>
    </citation>
    <scope>X-RAY CRYSTALLOGRAPHY (1.0 ANGSTROMS) OF 1-110</scope>
    <scope>FUNCTION</scope>
    <scope>SUBCELLULAR LOCATION</scope>
</reference>
<reference key="7">
    <citation type="journal article" date="2012" name="Acta Crystallogr. D">
        <title>Structural basis of the strict phospholipid binding specificity of the pleckstrin homology domain of human evectin-2.</title>
        <authorList>
            <person name="Okazaki S."/>
            <person name="Kato R."/>
            <person name="Uchida Y."/>
            <person name="Taguchi T."/>
            <person name="Arai H."/>
            <person name="Wakatsuki S."/>
        </authorList>
    </citation>
    <scope>X-RAY CRYSTALLOGRAPHY (1.75 ANGSTROMS) OF 1-110 IN COMPLEX WITH O-PHOSPHOSERINE</scope>
    <scope>FUNCTION</scope>
    <scope>SUBCELLULAR LOCATION</scope>
</reference>